<dbReference type="EC" id="4.1.1.23" evidence="1"/>
<dbReference type="EMBL" id="AM999887">
    <property type="protein sequence ID" value="CAQ54209.1"/>
    <property type="molecule type" value="Genomic_DNA"/>
</dbReference>
<dbReference type="RefSeq" id="WP_012481735.1">
    <property type="nucleotide sequence ID" value="NC_010981.1"/>
</dbReference>
<dbReference type="SMR" id="B3CN77"/>
<dbReference type="KEGG" id="wpi:WP0101"/>
<dbReference type="eggNOG" id="COG0284">
    <property type="taxonomic scope" value="Bacteria"/>
</dbReference>
<dbReference type="HOGENOM" id="CLU_067069_1_0_5"/>
<dbReference type="UniPathway" id="UPA00070">
    <property type="reaction ID" value="UER00120"/>
</dbReference>
<dbReference type="Proteomes" id="UP000008814">
    <property type="component" value="Chromosome"/>
</dbReference>
<dbReference type="GO" id="GO:0005829">
    <property type="term" value="C:cytosol"/>
    <property type="evidence" value="ECO:0007669"/>
    <property type="project" value="TreeGrafter"/>
</dbReference>
<dbReference type="GO" id="GO:0004590">
    <property type="term" value="F:orotidine-5'-phosphate decarboxylase activity"/>
    <property type="evidence" value="ECO:0007669"/>
    <property type="project" value="UniProtKB-UniRule"/>
</dbReference>
<dbReference type="GO" id="GO:0006207">
    <property type="term" value="P:'de novo' pyrimidine nucleobase biosynthetic process"/>
    <property type="evidence" value="ECO:0007669"/>
    <property type="project" value="InterPro"/>
</dbReference>
<dbReference type="GO" id="GO:0044205">
    <property type="term" value="P:'de novo' UMP biosynthetic process"/>
    <property type="evidence" value="ECO:0007669"/>
    <property type="project" value="UniProtKB-UniRule"/>
</dbReference>
<dbReference type="CDD" id="cd04725">
    <property type="entry name" value="OMP_decarboxylase_like"/>
    <property type="match status" value="1"/>
</dbReference>
<dbReference type="FunFam" id="3.20.20.70:FF:000015">
    <property type="entry name" value="Orotidine 5'-phosphate decarboxylase"/>
    <property type="match status" value="1"/>
</dbReference>
<dbReference type="Gene3D" id="3.20.20.70">
    <property type="entry name" value="Aldolase class I"/>
    <property type="match status" value="1"/>
</dbReference>
<dbReference type="HAMAP" id="MF_01200_B">
    <property type="entry name" value="OMPdecase_type1_B"/>
    <property type="match status" value="1"/>
</dbReference>
<dbReference type="InterPro" id="IPR013785">
    <property type="entry name" value="Aldolase_TIM"/>
</dbReference>
<dbReference type="InterPro" id="IPR014732">
    <property type="entry name" value="OMPdecase"/>
</dbReference>
<dbReference type="InterPro" id="IPR018089">
    <property type="entry name" value="OMPdecase_AS"/>
</dbReference>
<dbReference type="InterPro" id="IPR047596">
    <property type="entry name" value="OMPdecase_bac"/>
</dbReference>
<dbReference type="InterPro" id="IPR001754">
    <property type="entry name" value="OMPdeCOase_dom"/>
</dbReference>
<dbReference type="InterPro" id="IPR011060">
    <property type="entry name" value="RibuloseP-bd_barrel"/>
</dbReference>
<dbReference type="NCBIfam" id="NF001273">
    <property type="entry name" value="PRK00230.1"/>
    <property type="match status" value="1"/>
</dbReference>
<dbReference type="NCBIfam" id="TIGR01740">
    <property type="entry name" value="pyrF"/>
    <property type="match status" value="1"/>
</dbReference>
<dbReference type="PANTHER" id="PTHR32119">
    <property type="entry name" value="OROTIDINE 5'-PHOSPHATE DECARBOXYLASE"/>
    <property type="match status" value="1"/>
</dbReference>
<dbReference type="PANTHER" id="PTHR32119:SF2">
    <property type="entry name" value="OROTIDINE 5'-PHOSPHATE DECARBOXYLASE"/>
    <property type="match status" value="1"/>
</dbReference>
<dbReference type="Pfam" id="PF00215">
    <property type="entry name" value="OMPdecase"/>
    <property type="match status" value="1"/>
</dbReference>
<dbReference type="SMART" id="SM00934">
    <property type="entry name" value="OMPdecase"/>
    <property type="match status" value="1"/>
</dbReference>
<dbReference type="SUPFAM" id="SSF51366">
    <property type="entry name" value="Ribulose-phoshate binding barrel"/>
    <property type="match status" value="1"/>
</dbReference>
<dbReference type="PROSITE" id="PS00156">
    <property type="entry name" value="OMPDECASE"/>
    <property type="match status" value="1"/>
</dbReference>
<protein>
    <recommendedName>
        <fullName evidence="1">Orotidine 5'-phosphate decarboxylase</fullName>
        <ecNumber evidence="1">4.1.1.23</ecNumber>
    </recommendedName>
    <alternativeName>
        <fullName evidence="1">OMP decarboxylase</fullName>
        <shortName evidence="1">OMPDCase</shortName>
        <shortName evidence="1">OMPdecase</shortName>
    </alternativeName>
</protein>
<proteinExistence type="inferred from homology"/>
<accession>B3CN77</accession>
<reference key="1">
    <citation type="journal article" date="2008" name="Mol. Biol. Evol.">
        <title>Genome evolution of Wolbachia strain wPip from the Culex pipiens group.</title>
        <authorList>
            <person name="Klasson L."/>
            <person name="Walker T."/>
            <person name="Sebaihia M."/>
            <person name="Sanders M.J."/>
            <person name="Quail M.A."/>
            <person name="Lord A."/>
            <person name="Sanders S."/>
            <person name="Earl J."/>
            <person name="O'Neill S.L."/>
            <person name="Thomson N."/>
            <person name="Sinkins S.P."/>
            <person name="Parkhill J."/>
        </authorList>
    </citation>
    <scope>NUCLEOTIDE SEQUENCE [LARGE SCALE GENOMIC DNA]</scope>
    <source>
        <strain>wPip</strain>
    </source>
</reference>
<name>PYRF_WOLPP</name>
<gene>
    <name evidence="1" type="primary">pyrF</name>
    <name type="ordered locus">WP0101</name>
</gene>
<sequence>MNPIICALDTQDLNEAISWANGLRDKVGMVKLGLEFFAAHGPSGVREVAKCNVPIFLDLKLYDIPNTVARTVEAIKALDVEMLTLHISGGTKMLKEALSIVQGKKIKLIGVTVLTSMGNEDLSELGVAREAKSQVILLAKLAKKIGLHGVVCSALEAQEVRQECGKDFKIITPGIRMNRGHDDQKRTATPKEAINSGADYIVIGRPITESSNPASSAELILKSLTD</sequence>
<feature type="chain" id="PRO_1000138569" description="Orotidine 5'-phosphate decarboxylase">
    <location>
        <begin position="1"/>
        <end position="226"/>
    </location>
</feature>
<feature type="active site" description="Proton donor" evidence="1">
    <location>
        <position position="60"/>
    </location>
</feature>
<feature type="binding site" evidence="1">
    <location>
        <position position="9"/>
    </location>
    <ligand>
        <name>substrate</name>
    </ligand>
</feature>
<feature type="binding site" evidence="1">
    <location>
        <position position="31"/>
    </location>
    <ligand>
        <name>substrate</name>
    </ligand>
</feature>
<feature type="binding site" evidence="1">
    <location>
        <begin position="58"/>
        <end position="67"/>
    </location>
    <ligand>
        <name>substrate</name>
    </ligand>
</feature>
<feature type="binding site" evidence="1">
    <location>
        <position position="115"/>
    </location>
    <ligand>
        <name>substrate</name>
    </ligand>
</feature>
<feature type="binding site" evidence="1">
    <location>
        <position position="176"/>
    </location>
    <ligand>
        <name>substrate</name>
    </ligand>
</feature>
<feature type="binding site" evidence="1">
    <location>
        <position position="184"/>
    </location>
    <ligand>
        <name>substrate</name>
    </ligand>
</feature>
<feature type="binding site" evidence="1">
    <location>
        <position position="204"/>
    </location>
    <ligand>
        <name>substrate</name>
    </ligand>
</feature>
<feature type="binding site" evidence="1">
    <location>
        <position position="205"/>
    </location>
    <ligand>
        <name>substrate</name>
    </ligand>
</feature>
<comment type="function">
    <text evidence="1">Catalyzes the decarboxylation of orotidine 5'-monophosphate (OMP) to uridine 5'-monophosphate (UMP).</text>
</comment>
<comment type="catalytic activity">
    <reaction evidence="1">
        <text>orotidine 5'-phosphate + H(+) = UMP + CO2</text>
        <dbReference type="Rhea" id="RHEA:11596"/>
        <dbReference type="ChEBI" id="CHEBI:15378"/>
        <dbReference type="ChEBI" id="CHEBI:16526"/>
        <dbReference type="ChEBI" id="CHEBI:57538"/>
        <dbReference type="ChEBI" id="CHEBI:57865"/>
        <dbReference type="EC" id="4.1.1.23"/>
    </reaction>
</comment>
<comment type="pathway">
    <text evidence="1">Pyrimidine metabolism; UMP biosynthesis via de novo pathway; UMP from orotate: step 2/2.</text>
</comment>
<comment type="subunit">
    <text evidence="1">Homodimer.</text>
</comment>
<comment type="similarity">
    <text evidence="1">Belongs to the OMP decarboxylase family. Type 1 subfamily.</text>
</comment>
<organism>
    <name type="scientific">Wolbachia pipientis subsp. Culex pipiens (strain wPip)</name>
    <dbReference type="NCBI Taxonomy" id="570417"/>
    <lineage>
        <taxon>Bacteria</taxon>
        <taxon>Pseudomonadati</taxon>
        <taxon>Pseudomonadota</taxon>
        <taxon>Alphaproteobacteria</taxon>
        <taxon>Rickettsiales</taxon>
        <taxon>Anaplasmataceae</taxon>
        <taxon>Wolbachieae</taxon>
        <taxon>Wolbachia</taxon>
    </lineage>
</organism>
<keyword id="KW-0210">Decarboxylase</keyword>
<keyword id="KW-0456">Lyase</keyword>
<keyword id="KW-0665">Pyrimidine biosynthesis</keyword>
<evidence type="ECO:0000255" key="1">
    <source>
        <dbReference type="HAMAP-Rule" id="MF_01200"/>
    </source>
</evidence>